<protein>
    <recommendedName>
        <fullName>High-affinity branched-chain amino acid transport system permease protein LivH</fullName>
    </recommendedName>
    <alternativeName>
        <fullName>LIV-I protein H</fullName>
    </alternativeName>
</protein>
<reference key="1">
    <citation type="journal article" date="2001" name="Nature">
        <title>Genome sequence of enterohaemorrhagic Escherichia coli O157:H7.</title>
        <authorList>
            <person name="Perna N.T."/>
            <person name="Plunkett G. III"/>
            <person name="Burland V."/>
            <person name="Mau B."/>
            <person name="Glasner J.D."/>
            <person name="Rose D.J."/>
            <person name="Mayhew G.F."/>
            <person name="Evans P.S."/>
            <person name="Gregor J."/>
            <person name="Kirkpatrick H.A."/>
            <person name="Posfai G."/>
            <person name="Hackett J."/>
            <person name="Klink S."/>
            <person name="Boutin A."/>
            <person name="Shao Y."/>
            <person name="Miller L."/>
            <person name="Grotbeck E.J."/>
            <person name="Davis N.W."/>
            <person name="Lim A."/>
            <person name="Dimalanta E.T."/>
            <person name="Potamousis K."/>
            <person name="Apodaca J."/>
            <person name="Anantharaman T.S."/>
            <person name="Lin J."/>
            <person name="Yen G."/>
            <person name="Schwartz D.C."/>
            <person name="Welch R.A."/>
            <person name="Blattner F.R."/>
        </authorList>
    </citation>
    <scope>NUCLEOTIDE SEQUENCE [LARGE SCALE GENOMIC DNA]</scope>
    <source>
        <strain>O157:H7 / EDL933 / ATCC 700927 / EHEC</strain>
    </source>
</reference>
<reference key="2">
    <citation type="journal article" date="2001" name="DNA Res.">
        <title>Complete genome sequence of enterohemorrhagic Escherichia coli O157:H7 and genomic comparison with a laboratory strain K-12.</title>
        <authorList>
            <person name="Hayashi T."/>
            <person name="Makino K."/>
            <person name="Ohnishi M."/>
            <person name="Kurokawa K."/>
            <person name="Ishii K."/>
            <person name="Yokoyama K."/>
            <person name="Han C.-G."/>
            <person name="Ohtsubo E."/>
            <person name="Nakayama K."/>
            <person name="Murata T."/>
            <person name="Tanaka M."/>
            <person name="Tobe T."/>
            <person name="Iida T."/>
            <person name="Takami H."/>
            <person name="Honda T."/>
            <person name="Sasakawa C."/>
            <person name="Ogasawara N."/>
            <person name="Yasunaga T."/>
            <person name="Kuhara S."/>
            <person name="Shiba T."/>
            <person name="Hattori M."/>
            <person name="Shinagawa H."/>
        </authorList>
    </citation>
    <scope>NUCLEOTIDE SEQUENCE [LARGE SCALE GENOMIC DNA]</scope>
    <source>
        <strain>O157:H7 / Sakai / RIMD 0509952 / EHEC</strain>
    </source>
</reference>
<organism>
    <name type="scientific">Escherichia coli O157:H7</name>
    <dbReference type="NCBI Taxonomy" id="83334"/>
    <lineage>
        <taxon>Bacteria</taxon>
        <taxon>Pseudomonadati</taxon>
        <taxon>Pseudomonadota</taxon>
        <taxon>Gammaproteobacteria</taxon>
        <taxon>Enterobacterales</taxon>
        <taxon>Enterobacteriaceae</taxon>
        <taxon>Escherichia</taxon>
    </lineage>
</organism>
<name>LIVH_ECO57</name>
<evidence type="ECO:0000250" key="1"/>
<evidence type="ECO:0000255" key="2"/>
<evidence type="ECO:0000305" key="3"/>
<comment type="function">
    <text evidence="1">Part of the binding-protein-dependent transport system for branched-chain amino acids. Probably responsible for the translocation of the substrates across the membrane (By similarity).</text>
</comment>
<comment type="subcellular location">
    <subcellularLocation>
        <location evidence="1">Cell inner membrane</location>
        <topology evidence="1">Multi-pass membrane protein</topology>
    </subcellularLocation>
</comment>
<comment type="similarity">
    <text evidence="3">Belongs to the binding-protein-dependent transport system permease family. LivHM subfamily.</text>
</comment>
<sequence>MSEQFLYFLQQMFNGVTLGSTYALIAIGYTMVYGIIGMINFAHGEVYMIGSYVSFMIIAALMMMGIDTGWLLVAAGFVGAIVIASAYGWSIERVAYRPVRNSKRLIALISAIGMSIFLQNYVSLTEGSRDVALPSLFNGQWVVGHSENFSASITTMQAVIWIVTFLAMLALTIFIRYSRMGRACRACAEDLKMASLLGINTDRVIALTFVIGAAMAAVAGVLLGQFYGVINPYIGFMAGMKAFTAAVLGGIGSIPGAMIGGLILGIAEALSSAYLSTEYKDVVSFALLILVLLVMPTGILGRPEVEKV</sequence>
<proteinExistence type="inferred from homology"/>
<dbReference type="EMBL" id="AE005174">
    <property type="protein sequence ID" value="AAG58564.1"/>
    <property type="molecule type" value="Genomic_DNA"/>
</dbReference>
<dbReference type="EMBL" id="BA000007">
    <property type="protein sequence ID" value="BAB37727.1"/>
    <property type="molecule type" value="Genomic_DNA"/>
</dbReference>
<dbReference type="PIR" id="H86012">
    <property type="entry name" value="H86012"/>
</dbReference>
<dbReference type="PIR" id="H91166">
    <property type="entry name" value="H91166"/>
</dbReference>
<dbReference type="RefSeq" id="NP_312331.1">
    <property type="nucleotide sequence ID" value="NC_002695.1"/>
</dbReference>
<dbReference type="RefSeq" id="WP_001295111.1">
    <property type="nucleotide sequence ID" value="NZ_VOAI01000004.1"/>
</dbReference>
<dbReference type="STRING" id="155864.Z4827"/>
<dbReference type="GeneID" id="915841"/>
<dbReference type="GeneID" id="93778534"/>
<dbReference type="KEGG" id="ece:Z4827"/>
<dbReference type="KEGG" id="ecs:ECs_4304"/>
<dbReference type="PATRIC" id="fig|386585.9.peg.4496"/>
<dbReference type="eggNOG" id="COG0559">
    <property type="taxonomic scope" value="Bacteria"/>
</dbReference>
<dbReference type="HOGENOM" id="CLU_039929_3_1_6"/>
<dbReference type="OMA" id="NMGWFLI"/>
<dbReference type="Proteomes" id="UP000000558">
    <property type="component" value="Chromosome"/>
</dbReference>
<dbReference type="Proteomes" id="UP000002519">
    <property type="component" value="Chromosome"/>
</dbReference>
<dbReference type="GO" id="GO:0005886">
    <property type="term" value="C:plasma membrane"/>
    <property type="evidence" value="ECO:0007669"/>
    <property type="project" value="UniProtKB-SubCell"/>
</dbReference>
<dbReference type="GO" id="GO:0015188">
    <property type="term" value="F:L-isoleucine transmembrane transporter activity"/>
    <property type="evidence" value="ECO:0007669"/>
    <property type="project" value="TreeGrafter"/>
</dbReference>
<dbReference type="GO" id="GO:0015190">
    <property type="term" value="F:L-leucine transmembrane transporter activity"/>
    <property type="evidence" value="ECO:0007669"/>
    <property type="project" value="TreeGrafter"/>
</dbReference>
<dbReference type="GO" id="GO:0015192">
    <property type="term" value="F:L-phenylalanine transmembrane transporter activity"/>
    <property type="evidence" value="ECO:0007669"/>
    <property type="project" value="TreeGrafter"/>
</dbReference>
<dbReference type="GO" id="GO:0005304">
    <property type="term" value="F:L-valine transmembrane transporter activity"/>
    <property type="evidence" value="ECO:0007669"/>
    <property type="project" value="TreeGrafter"/>
</dbReference>
<dbReference type="GO" id="GO:0042941">
    <property type="term" value="P:D-alanine transmembrane transport"/>
    <property type="evidence" value="ECO:0007669"/>
    <property type="project" value="TreeGrafter"/>
</dbReference>
<dbReference type="GO" id="GO:0015808">
    <property type="term" value="P:L-alanine transport"/>
    <property type="evidence" value="ECO:0007669"/>
    <property type="project" value="TreeGrafter"/>
</dbReference>
<dbReference type="GO" id="GO:1903806">
    <property type="term" value="P:L-isoleucine import across plasma membrane"/>
    <property type="evidence" value="ECO:0007669"/>
    <property type="project" value="TreeGrafter"/>
</dbReference>
<dbReference type="CDD" id="cd06582">
    <property type="entry name" value="TM_PBP1_LivH_like"/>
    <property type="match status" value="1"/>
</dbReference>
<dbReference type="InterPro" id="IPR001851">
    <property type="entry name" value="ABC_transp_permease"/>
</dbReference>
<dbReference type="InterPro" id="IPR052157">
    <property type="entry name" value="BCAA_transport_permease"/>
</dbReference>
<dbReference type="NCBIfam" id="NF008011">
    <property type="entry name" value="PRK10740.1"/>
    <property type="match status" value="1"/>
</dbReference>
<dbReference type="PANTHER" id="PTHR11795">
    <property type="entry name" value="BRANCHED-CHAIN AMINO ACID TRANSPORT SYSTEM PERMEASE PROTEIN LIVH"/>
    <property type="match status" value="1"/>
</dbReference>
<dbReference type="PANTHER" id="PTHR11795:SF371">
    <property type="entry name" value="HIGH-AFFINITY BRANCHED-CHAIN AMINO ACID TRANSPORT SYSTEM PERMEASE PROTEIN LIVH"/>
    <property type="match status" value="1"/>
</dbReference>
<dbReference type="Pfam" id="PF02653">
    <property type="entry name" value="BPD_transp_2"/>
    <property type="match status" value="1"/>
</dbReference>
<feature type="chain" id="PRO_0000060059" description="High-affinity branched-chain amino acid transport system permease protein LivH">
    <location>
        <begin position="1"/>
        <end position="308"/>
    </location>
</feature>
<feature type="topological domain" description="Cytoplasmic" evidence="2">
    <location>
        <begin position="1"/>
        <end position="21"/>
    </location>
</feature>
<feature type="transmembrane region" description="Helical" evidence="2">
    <location>
        <begin position="22"/>
        <end position="42"/>
    </location>
</feature>
<feature type="topological domain" description="Periplasmic" evidence="2">
    <location>
        <begin position="43"/>
        <end position="45"/>
    </location>
</feature>
<feature type="transmembrane region" description="Helical" evidence="2">
    <location>
        <begin position="46"/>
        <end position="66"/>
    </location>
</feature>
<feature type="topological domain" description="Cytoplasmic" evidence="2">
    <location>
        <begin position="67"/>
        <end position="68"/>
    </location>
</feature>
<feature type="transmembrane region" description="Helical" evidence="2">
    <location>
        <begin position="69"/>
        <end position="89"/>
    </location>
</feature>
<feature type="topological domain" description="Periplasmic" evidence="2">
    <location>
        <begin position="90"/>
        <end position="104"/>
    </location>
</feature>
<feature type="transmembrane region" description="Helical" evidence="2">
    <location>
        <begin position="105"/>
        <end position="125"/>
    </location>
</feature>
<feature type="topological domain" description="Cytoplasmic" evidence="2">
    <location>
        <begin position="126"/>
        <end position="154"/>
    </location>
</feature>
<feature type="transmembrane region" description="Helical" evidence="2">
    <location>
        <begin position="155"/>
        <end position="175"/>
    </location>
</feature>
<feature type="topological domain" description="Periplasmic" evidence="2">
    <location>
        <begin position="176"/>
        <end position="203"/>
    </location>
</feature>
<feature type="transmembrane region" description="Helical" evidence="2">
    <location>
        <begin position="204"/>
        <end position="224"/>
    </location>
</feature>
<feature type="topological domain" description="Cytoplasmic" evidence="2">
    <location>
        <begin position="225"/>
        <end position="245"/>
    </location>
</feature>
<feature type="transmembrane region" description="Helical" evidence="2">
    <location>
        <begin position="246"/>
        <end position="266"/>
    </location>
</feature>
<feature type="topological domain" description="Periplasmic" evidence="2">
    <location>
        <begin position="267"/>
        <end position="280"/>
    </location>
</feature>
<feature type="transmembrane region" description="Helical" evidence="2">
    <location>
        <begin position="281"/>
        <end position="301"/>
    </location>
</feature>
<feature type="topological domain" description="Cytoplasmic" evidence="2">
    <location>
        <begin position="302"/>
        <end position="308"/>
    </location>
</feature>
<accession>P0AEX8</accession>
<accession>P08340</accession>
<gene>
    <name type="primary">livH</name>
    <name type="ordered locus">Z4827</name>
    <name type="ordered locus">ECs4304</name>
</gene>
<keyword id="KW-0029">Amino-acid transport</keyword>
<keyword id="KW-0997">Cell inner membrane</keyword>
<keyword id="KW-1003">Cell membrane</keyword>
<keyword id="KW-0472">Membrane</keyword>
<keyword id="KW-1185">Reference proteome</keyword>
<keyword id="KW-0812">Transmembrane</keyword>
<keyword id="KW-1133">Transmembrane helix</keyword>
<keyword id="KW-0813">Transport</keyword>